<protein>
    <recommendedName>
        <fullName>Ambineela</fullName>
    </recommendedName>
</protein>
<comment type="function">
    <text>Ambineela is a blue protein and has a pI of 8.7.</text>
</comment>
<comment type="subunit">
    <text>Monomer.</text>
</comment>
<comment type="PTM">
    <text>The blue color is due to an unidentified non-fluorescent cofactor, covalently bound to it.</text>
</comment>
<name>AMBI_ACIAM</name>
<organism>
    <name type="scientific">Acidianus ambivalens</name>
    <name type="common">Desulfurolobus ambivalens</name>
    <dbReference type="NCBI Taxonomy" id="2283"/>
    <lineage>
        <taxon>Archaea</taxon>
        <taxon>Thermoproteota</taxon>
        <taxon>Thermoprotei</taxon>
        <taxon>Sulfolobales</taxon>
        <taxon>Sulfolobaceae</taxon>
        <taxon>Acidianus</taxon>
    </lineage>
</organism>
<sequence length="48" mass="5061">MKKIVIVGGGIAGMGIANTLADKLKGKAEITVINKEDFYFAGPSRXIL</sequence>
<proteinExistence type="evidence at protein level"/>
<dbReference type="PIR" id="JE0263">
    <property type="entry name" value="JE0263"/>
</dbReference>
<dbReference type="GO" id="GO:0004497">
    <property type="term" value="F:monooxygenase activity"/>
    <property type="evidence" value="ECO:0007669"/>
    <property type="project" value="InterPro"/>
</dbReference>
<dbReference type="Gene3D" id="3.50.50.100">
    <property type="match status" value="1"/>
</dbReference>
<dbReference type="InterPro" id="IPR036188">
    <property type="entry name" value="FAD/NAD-bd_sf"/>
</dbReference>
<dbReference type="InterPro" id="IPR006905">
    <property type="entry name" value="Flavin_halogenase"/>
</dbReference>
<dbReference type="InterPro" id="IPR052541">
    <property type="entry name" value="SQRD"/>
</dbReference>
<dbReference type="PANTHER" id="PTHR43755">
    <property type="match status" value="1"/>
</dbReference>
<dbReference type="PANTHER" id="PTHR43755:SF1">
    <property type="entry name" value="FAD-DEPENDENT PYRIDINE NUCLEOTIDE-DISULPHIDE OXIDOREDUCTASE"/>
    <property type="match status" value="1"/>
</dbReference>
<dbReference type="Pfam" id="PF04820">
    <property type="entry name" value="Trp_halogenase"/>
    <property type="match status" value="1"/>
</dbReference>
<dbReference type="SUPFAM" id="SSF51905">
    <property type="entry name" value="FAD/NAD(P)-binding domain"/>
    <property type="match status" value="1"/>
</dbReference>
<feature type="chain" id="PRO_0000064575" description="Ambineela">
    <location>
        <begin position="1"/>
        <end position="48" status="greater than"/>
    </location>
</feature>
<feature type="non-terminal residue">
    <location>
        <position position="48"/>
    </location>
</feature>
<keyword id="KW-0903">Direct protein sequencing</keyword>
<accession>P81540</accession>
<reference key="1">
    <citation type="journal article" date="1998" name="Biochem. Biophys. Res. Commun.">
        <title>Ambineela, an unusual blue protein isolated from the archaeon Acidianus ambivalens.</title>
        <authorList>
            <person name="Gomes C.M."/>
            <person name="Teixeira M."/>
        </authorList>
    </citation>
    <scope>PROTEIN SEQUENCE</scope>
    <source>
        <strain>Lei 10 / DSM 3772 / JCM 9191</strain>
    </source>
</reference>